<sequence length="483" mass="52904">MAASETAPFGVSAASKGGGGVAGARAQHGQLAVAGRVHDALVFAAGAVAAVLVLLATASFLSPMPVTNLVAFRSLPVSVASTSAASAAIDADVGVRGGPGAAGRTFYDDSRVSYAVEVGRRGGITGWDARRAAWMRLRYPRGLNATAAGRERVVMVSGSQAPPCRGEGGDHLLFRFLKNKVDYCRLHGVELLYNNALLQPRMLAYWAKIPAVRAAMLAHPDAEWVWWVDADAVFTDMDFSLPLHKYKDHNLVVYGWNKEVYGERSWVGLNAGVFLIRNCQWSLDFMDAWARMGPASPEYARWGSVLHDTLRGKSDKESDDQSALVYLLSEHEEKWGAKTYLEKGYFFQGYWVEVVDRLDDIAARYEAAERRPSAAAAHLRRRHAEREHERYAAARNAAVRGAVPGPAGGGQSGWRRPFVTHFTGCQPCGGEPNKIYSKKSCADGMNRALNFADDQVLRNYGYRHKDPLSDEVRPLPFDYPAAR</sequence>
<gene>
    <name evidence="5" type="primary">GT6</name>
    <name evidence="8" type="ordered locus">Os11g0546500</name>
    <name evidence="7" type="ordered locus">LOC_Os11g34390</name>
</gene>
<proteinExistence type="evidence at transcript level"/>
<keyword id="KW-0325">Glycoprotein</keyword>
<keyword id="KW-0328">Glycosyltransferase</keyword>
<keyword id="KW-0333">Golgi apparatus</keyword>
<keyword id="KW-0472">Membrane</keyword>
<keyword id="KW-1185">Reference proteome</keyword>
<keyword id="KW-0735">Signal-anchor</keyword>
<keyword id="KW-0808">Transferase</keyword>
<keyword id="KW-0812">Transmembrane</keyword>
<keyword id="KW-1133">Transmembrane helix</keyword>
<name>GT6_ORYSJ</name>
<reference key="1">
    <citation type="journal article" date="2005" name="BMC Biol.">
        <title>The sequence of rice chromosomes 11 and 12, rich in disease resistance genes and recent gene duplications.</title>
        <authorList>
            <consortium name="The rice chromosomes 11 and 12 sequencing consortia"/>
        </authorList>
    </citation>
    <scope>NUCLEOTIDE SEQUENCE [LARGE SCALE GENOMIC DNA]</scope>
    <source>
        <strain>cv. Nipponbare</strain>
    </source>
</reference>
<reference key="2">
    <citation type="journal article" date="2005" name="Nature">
        <title>The map-based sequence of the rice genome.</title>
        <authorList>
            <consortium name="International rice genome sequencing project (IRGSP)"/>
        </authorList>
    </citation>
    <scope>NUCLEOTIDE SEQUENCE [LARGE SCALE GENOMIC DNA]</scope>
    <source>
        <strain>cv. Nipponbare</strain>
    </source>
</reference>
<reference key="3">
    <citation type="journal article" date="2008" name="Nucleic Acids Res.">
        <title>The rice annotation project database (RAP-DB): 2008 update.</title>
        <authorList>
            <consortium name="The rice annotation project (RAP)"/>
        </authorList>
    </citation>
    <scope>GENOME REANNOTATION</scope>
    <source>
        <strain>cv. Nipponbare</strain>
    </source>
</reference>
<reference key="4">
    <citation type="journal article" date="2013" name="Rice">
        <title>Improvement of the Oryza sativa Nipponbare reference genome using next generation sequence and optical map data.</title>
        <authorList>
            <person name="Kawahara Y."/>
            <person name="de la Bastide M."/>
            <person name="Hamilton J.P."/>
            <person name="Kanamori H."/>
            <person name="McCombie W.R."/>
            <person name="Ouyang S."/>
            <person name="Schwartz D.C."/>
            <person name="Tanaka T."/>
            <person name="Wu J."/>
            <person name="Zhou S."/>
            <person name="Childs K.L."/>
            <person name="Davidson R.M."/>
            <person name="Lin H."/>
            <person name="Quesada-Ocampo L."/>
            <person name="Vaillancourt B."/>
            <person name="Sakai H."/>
            <person name="Lee S.S."/>
            <person name="Kim J."/>
            <person name="Numa H."/>
            <person name="Itoh T."/>
            <person name="Buell C.R."/>
            <person name="Matsumoto T."/>
        </authorList>
    </citation>
    <scope>GENOME REANNOTATION</scope>
    <source>
        <strain>cv. Nipponbare</strain>
    </source>
</reference>
<reference key="5">
    <citation type="journal article" date="2013" name="Gene">
        <title>A collection of glycosyltransferases from rice (Oryza sativa) exposed to atrazine.</title>
        <authorList>
            <person name="Lu Y.C."/>
            <person name="Yang S.N."/>
            <person name="Zhang J.J."/>
            <person name="Zhang J.J."/>
            <person name="Tan L.R."/>
            <person name="Yang H."/>
        </authorList>
    </citation>
    <scope>INDUCTION</scope>
</reference>
<reference key="6">
    <citation type="journal article" date="2014" name="J. Exp. Bot.">
        <title>Mutation in xyloglucan 6-xylosytransferase results in abnormal root hair development in Oryza sativa.</title>
        <authorList>
            <person name="Wang C."/>
            <person name="Li S."/>
            <person name="Ng S."/>
            <person name="Zhang B."/>
            <person name="Zhou Y."/>
            <person name="Whelan J."/>
            <person name="Wu P."/>
            <person name="Shou H."/>
        </authorList>
    </citation>
    <scope>NOMENCLATURE</scope>
</reference>
<comment type="function">
    <text evidence="1">Probable glycosyltransferase that may be involved in the biosynthesis of xyloglucan.</text>
</comment>
<comment type="subcellular location">
    <subcellularLocation>
        <location evidence="6">Golgi apparatus membrane</location>
        <topology evidence="6">Single-pass type II membrane protein</topology>
    </subcellularLocation>
</comment>
<comment type="induction">
    <text evidence="4">Down-regulated by treatment with atrazine.</text>
</comment>
<comment type="similarity">
    <text evidence="6">Belongs to the glycosyltransferase 34 family.</text>
</comment>
<organism>
    <name type="scientific">Oryza sativa subsp. japonica</name>
    <name type="common">Rice</name>
    <dbReference type="NCBI Taxonomy" id="39947"/>
    <lineage>
        <taxon>Eukaryota</taxon>
        <taxon>Viridiplantae</taxon>
        <taxon>Streptophyta</taxon>
        <taxon>Embryophyta</taxon>
        <taxon>Tracheophyta</taxon>
        <taxon>Spermatophyta</taxon>
        <taxon>Magnoliopsida</taxon>
        <taxon>Liliopsida</taxon>
        <taxon>Poales</taxon>
        <taxon>Poaceae</taxon>
        <taxon>BOP clade</taxon>
        <taxon>Oryzoideae</taxon>
        <taxon>Oryzeae</taxon>
        <taxon>Oryzinae</taxon>
        <taxon>Oryza</taxon>
        <taxon>Oryza sativa</taxon>
    </lineage>
</organism>
<accession>Q2R2W8</accession>
<accession>A0A0P0Y3J3</accession>
<dbReference type="EC" id="2.4.-.-" evidence="6"/>
<dbReference type="EMBL" id="DP000010">
    <property type="protein sequence ID" value="ABA94224.1"/>
    <property type="molecule type" value="Genomic_DNA"/>
</dbReference>
<dbReference type="EMBL" id="AP008217">
    <property type="protein sequence ID" value="BAF28429.1"/>
    <property type="molecule type" value="Genomic_DNA"/>
</dbReference>
<dbReference type="EMBL" id="AP014967">
    <property type="protein sequence ID" value="BAT14385.1"/>
    <property type="molecule type" value="Genomic_DNA"/>
</dbReference>
<dbReference type="SMR" id="Q2R2W8"/>
<dbReference type="FunCoup" id="Q2R2W8">
    <property type="interactions" value="9"/>
</dbReference>
<dbReference type="STRING" id="39947.Q2R2W8"/>
<dbReference type="CAZy" id="GT34">
    <property type="family name" value="Glycosyltransferase Family 34"/>
</dbReference>
<dbReference type="GlyCosmos" id="Q2R2W8">
    <property type="glycosylation" value="1 site, No reported glycans"/>
</dbReference>
<dbReference type="PaxDb" id="39947-Q2R2W8"/>
<dbReference type="EnsemblPlants" id="Os11t0546500-00">
    <property type="protein sequence ID" value="Os11t0546500-00"/>
    <property type="gene ID" value="Os11g0546500"/>
</dbReference>
<dbReference type="Gramene" id="Os11t0546500-00">
    <property type="protein sequence ID" value="Os11t0546500-00"/>
    <property type="gene ID" value="Os11g0546500"/>
</dbReference>
<dbReference type="KEGG" id="dosa:Os11g0546500"/>
<dbReference type="eggNOG" id="KOG4748">
    <property type="taxonomic scope" value="Eukaryota"/>
</dbReference>
<dbReference type="HOGENOM" id="CLU_034328_0_0_1"/>
<dbReference type="InParanoid" id="Q2R2W8"/>
<dbReference type="OMA" id="MDLIDTW"/>
<dbReference type="PlantReactome" id="R-OSA-5655101">
    <property type="pathway name" value="Xyloglucan biosynthesis"/>
</dbReference>
<dbReference type="Proteomes" id="UP000000763">
    <property type="component" value="Chromosome 11"/>
</dbReference>
<dbReference type="Proteomes" id="UP000059680">
    <property type="component" value="Chromosome 11"/>
</dbReference>
<dbReference type="GO" id="GO:0000139">
    <property type="term" value="C:Golgi membrane"/>
    <property type="evidence" value="ECO:0007669"/>
    <property type="project" value="UniProtKB-SubCell"/>
</dbReference>
<dbReference type="GO" id="GO:0008378">
    <property type="term" value="F:galactosyltransferase activity"/>
    <property type="evidence" value="ECO:0000318"/>
    <property type="project" value="GO_Central"/>
</dbReference>
<dbReference type="FunFam" id="3.90.550.10:FF:000127">
    <property type="entry name" value="Probable glycosyltransferase 7"/>
    <property type="match status" value="1"/>
</dbReference>
<dbReference type="Gene3D" id="3.90.550.10">
    <property type="entry name" value="Spore Coat Polysaccharide Biosynthesis Protein SpsA, Chain A"/>
    <property type="match status" value="1"/>
</dbReference>
<dbReference type="InterPro" id="IPR008630">
    <property type="entry name" value="Glyco_trans_34"/>
</dbReference>
<dbReference type="InterPro" id="IPR029044">
    <property type="entry name" value="Nucleotide-diphossugar_trans"/>
</dbReference>
<dbReference type="PANTHER" id="PTHR31311:SF45">
    <property type="entry name" value="GLYCOSYLTRANSFERASE 6-RELATED"/>
    <property type="match status" value="1"/>
</dbReference>
<dbReference type="PANTHER" id="PTHR31311">
    <property type="entry name" value="XYLOGLUCAN 6-XYLOSYLTRANSFERASE 5-RELATED-RELATED"/>
    <property type="match status" value="1"/>
</dbReference>
<dbReference type="Pfam" id="PF05637">
    <property type="entry name" value="Glyco_transf_34"/>
    <property type="match status" value="1"/>
</dbReference>
<protein>
    <recommendedName>
        <fullName evidence="6">Probable glycosyltransferase 6</fullName>
        <shortName evidence="5">OsGT6</shortName>
        <ecNumber evidence="6">2.4.-.-</ecNumber>
    </recommendedName>
</protein>
<evidence type="ECO:0000250" key="1">
    <source>
        <dbReference type="UniProtKB" id="Q10MQ0"/>
    </source>
</evidence>
<evidence type="ECO:0000255" key="2"/>
<evidence type="ECO:0000255" key="3">
    <source>
        <dbReference type="PROSITE-ProRule" id="PRU00498"/>
    </source>
</evidence>
<evidence type="ECO:0000269" key="4">
    <source>
    </source>
</evidence>
<evidence type="ECO:0000303" key="5">
    <source>
    </source>
</evidence>
<evidence type="ECO:0000305" key="6"/>
<evidence type="ECO:0000312" key="7">
    <source>
        <dbReference type="EMBL" id="ABA94224.1"/>
    </source>
</evidence>
<evidence type="ECO:0000312" key="8">
    <source>
        <dbReference type="EMBL" id="BAF28429.1"/>
    </source>
</evidence>
<feature type="chain" id="PRO_0000434333" description="Probable glycosyltransferase 6">
    <location>
        <begin position="1"/>
        <end position="483"/>
    </location>
</feature>
<feature type="topological domain" description="Cytoplasmic" evidence="6">
    <location>
        <begin position="1"/>
        <end position="40"/>
    </location>
</feature>
<feature type="transmembrane region" description="Helical; Signal-anchor for type II membrane protein" evidence="2">
    <location>
        <begin position="41"/>
        <end position="61"/>
    </location>
</feature>
<feature type="topological domain" description="Lumenal" evidence="6">
    <location>
        <begin position="62"/>
        <end position="483"/>
    </location>
</feature>
<feature type="glycosylation site" description="N-linked (GlcNAc...) asparagine" evidence="3">
    <location>
        <position position="144"/>
    </location>
</feature>